<dbReference type="EC" id="5.1.1.3" evidence="1"/>
<dbReference type="EMBL" id="CP001098">
    <property type="protein sequence ID" value="ACL69020.1"/>
    <property type="molecule type" value="Genomic_DNA"/>
</dbReference>
<dbReference type="RefSeq" id="WP_012635208.1">
    <property type="nucleotide sequence ID" value="NC_011899.1"/>
</dbReference>
<dbReference type="SMR" id="B8D151"/>
<dbReference type="STRING" id="373903.Hore_02590"/>
<dbReference type="KEGG" id="hor:Hore_02590"/>
<dbReference type="eggNOG" id="COG0796">
    <property type="taxonomic scope" value="Bacteria"/>
</dbReference>
<dbReference type="HOGENOM" id="CLU_052344_1_0_9"/>
<dbReference type="OrthoDB" id="9801055at2"/>
<dbReference type="UniPathway" id="UPA00219"/>
<dbReference type="Proteomes" id="UP000000719">
    <property type="component" value="Chromosome"/>
</dbReference>
<dbReference type="GO" id="GO:0008881">
    <property type="term" value="F:glutamate racemase activity"/>
    <property type="evidence" value="ECO:0007669"/>
    <property type="project" value="UniProtKB-UniRule"/>
</dbReference>
<dbReference type="GO" id="GO:0071555">
    <property type="term" value="P:cell wall organization"/>
    <property type="evidence" value="ECO:0007669"/>
    <property type="project" value="UniProtKB-KW"/>
</dbReference>
<dbReference type="GO" id="GO:0009252">
    <property type="term" value="P:peptidoglycan biosynthetic process"/>
    <property type="evidence" value="ECO:0007669"/>
    <property type="project" value="UniProtKB-UniRule"/>
</dbReference>
<dbReference type="GO" id="GO:0008360">
    <property type="term" value="P:regulation of cell shape"/>
    <property type="evidence" value="ECO:0007669"/>
    <property type="project" value="UniProtKB-KW"/>
</dbReference>
<dbReference type="FunFam" id="3.40.50.1860:FF:000002">
    <property type="entry name" value="Glutamate racemase"/>
    <property type="match status" value="1"/>
</dbReference>
<dbReference type="Gene3D" id="3.40.50.1860">
    <property type="match status" value="2"/>
</dbReference>
<dbReference type="HAMAP" id="MF_00258">
    <property type="entry name" value="Glu_racemase"/>
    <property type="match status" value="1"/>
</dbReference>
<dbReference type="InterPro" id="IPR015942">
    <property type="entry name" value="Asp/Glu/hydantoin_racemase"/>
</dbReference>
<dbReference type="InterPro" id="IPR001920">
    <property type="entry name" value="Asp/Glu_race"/>
</dbReference>
<dbReference type="InterPro" id="IPR018187">
    <property type="entry name" value="Asp/Glu_racemase_AS_1"/>
</dbReference>
<dbReference type="InterPro" id="IPR004391">
    <property type="entry name" value="Glu_race"/>
</dbReference>
<dbReference type="NCBIfam" id="TIGR00067">
    <property type="entry name" value="glut_race"/>
    <property type="match status" value="1"/>
</dbReference>
<dbReference type="PANTHER" id="PTHR21198">
    <property type="entry name" value="GLUTAMATE RACEMASE"/>
    <property type="match status" value="1"/>
</dbReference>
<dbReference type="PANTHER" id="PTHR21198:SF3">
    <property type="entry name" value="GLUTAMATE RACEMASE"/>
    <property type="match status" value="1"/>
</dbReference>
<dbReference type="Pfam" id="PF01177">
    <property type="entry name" value="Asp_Glu_race"/>
    <property type="match status" value="1"/>
</dbReference>
<dbReference type="SUPFAM" id="SSF53681">
    <property type="entry name" value="Aspartate/glutamate racemase"/>
    <property type="match status" value="2"/>
</dbReference>
<dbReference type="PROSITE" id="PS00923">
    <property type="entry name" value="ASP_GLU_RACEMASE_1"/>
    <property type="match status" value="1"/>
</dbReference>
<proteinExistence type="inferred from homology"/>
<comment type="function">
    <text evidence="1">Provides the (R)-glutamate required for cell wall biosynthesis.</text>
</comment>
<comment type="catalytic activity">
    <reaction evidence="1">
        <text>L-glutamate = D-glutamate</text>
        <dbReference type="Rhea" id="RHEA:12813"/>
        <dbReference type="ChEBI" id="CHEBI:29985"/>
        <dbReference type="ChEBI" id="CHEBI:29986"/>
        <dbReference type="EC" id="5.1.1.3"/>
    </reaction>
</comment>
<comment type="pathway">
    <text evidence="1">Cell wall biogenesis; peptidoglycan biosynthesis.</text>
</comment>
<comment type="similarity">
    <text evidence="1">Belongs to the aspartate/glutamate racemases family.</text>
</comment>
<name>MURI_HALOH</name>
<evidence type="ECO:0000255" key="1">
    <source>
        <dbReference type="HAMAP-Rule" id="MF_00258"/>
    </source>
</evidence>
<accession>B8D151</accession>
<sequence length="253" mass="28556">MRIGIFDSGVGGITVLKEALNLLPGEDYIYYADTANVPYGTKDKNEVRQYIFKAVEFLINRGIEALVVACNTATSIAIKDLRETYQFPIVGMEPAVKPAVERSRNKKVLVLATPLTIREEKFRNLVSRVKAEDIVDSLGLPGLVEYAEGFVFDENIIIPYLKDRLSPFNLQEYGTLVLGCTHFLYFRDIFNKIIPDHIDIIDGNKGTVRHLKNLLLQSGFKTGSEGSGEIIFYSSGKKDERRLKKYLDILKEI</sequence>
<protein>
    <recommendedName>
        <fullName evidence="1">Glutamate racemase</fullName>
        <ecNumber evidence="1">5.1.1.3</ecNumber>
    </recommendedName>
</protein>
<keyword id="KW-0133">Cell shape</keyword>
<keyword id="KW-0961">Cell wall biogenesis/degradation</keyword>
<keyword id="KW-0413">Isomerase</keyword>
<keyword id="KW-0573">Peptidoglycan synthesis</keyword>
<keyword id="KW-1185">Reference proteome</keyword>
<organism>
    <name type="scientific">Halothermothrix orenii (strain H 168 / OCM 544 / DSM 9562)</name>
    <dbReference type="NCBI Taxonomy" id="373903"/>
    <lineage>
        <taxon>Bacteria</taxon>
        <taxon>Bacillati</taxon>
        <taxon>Bacillota</taxon>
        <taxon>Clostridia</taxon>
        <taxon>Halanaerobiales</taxon>
        <taxon>Halothermotrichaceae</taxon>
        <taxon>Halothermothrix</taxon>
    </lineage>
</organism>
<feature type="chain" id="PRO_1000125611" description="Glutamate racemase">
    <location>
        <begin position="1"/>
        <end position="253"/>
    </location>
</feature>
<feature type="active site" description="Proton donor/acceptor" evidence="1">
    <location>
        <position position="70"/>
    </location>
</feature>
<feature type="active site" description="Proton donor/acceptor" evidence="1">
    <location>
        <position position="180"/>
    </location>
</feature>
<feature type="binding site" evidence="1">
    <location>
        <begin position="7"/>
        <end position="8"/>
    </location>
    <ligand>
        <name>substrate</name>
    </ligand>
</feature>
<feature type="binding site" evidence="1">
    <location>
        <begin position="39"/>
        <end position="40"/>
    </location>
    <ligand>
        <name>substrate</name>
    </ligand>
</feature>
<feature type="binding site" evidence="1">
    <location>
        <begin position="71"/>
        <end position="72"/>
    </location>
    <ligand>
        <name>substrate</name>
    </ligand>
</feature>
<feature type="binding site" evidence="1">
    <location>
        <begin position="181"/>
        <end position="182"/>
    </location>
    <ligand>
        <name>substrate</name>
    </ligand>
</feature>
<gene>
    <name evidence="1" type="primary">murI</name>
    <name type="ordered locus">Hore_02590</name>
</gene>
<reference key="1">
    <citation type="journal article" date="2009" name="PLoS ONE">
        <title>Genome analysis of the anaerobic thermohalophilic bacterium Halothermothrix orenii.</title>
        <authorList>
            <person name="Mavromatis K."/>
            <person name="Ivanova N."/>
            <person name="Anderson I."/>
            <person name="Lykidis A."/>
            <person name="Hooper S.D."/>
            <person name="Sun H."/>
            <person name="Kunin V."/>
            <person name="Lapidus A."/>
            <person name="Hugenholtz P."/>
            <person name="Patel B."/>
            <person name="Kyrpides N.C."/>
        </authorList>
    </citation>
    <scope>NUCLEOTIDE SEQUENCE [LARGE SCALE GENOMIC DNA]</scope>
    <source>
        <strain>H 168 / OCM 544 / DSM 9562</strain>
    </source>
</reference>